<comment type="function">
    <text evidence="1">Catalyzes the acyloin condensation reaction between C atoms 2 and 3 of pyruvate and glyceraldehyde 3-phosphate to yield 1-deoxy-D-xylulose-5-phosphate (DXP).</text>
</comment>
<comment type="catalytic activity">
    <reaction evidence="1">
        <text>D-glyceraldehyde 3-phosphate + pyruvate + H(+) = 1-deoxy-D-xylulose 5-phosphate + CO2</text>
        <dbReference type="Rhea" id="RHEA:12605"/>
        <dbReference type="ChEBI" id="CHEBI:15361"/>
        <dbReference type="ChEBI" id="CHEBI:15378"/>
        <dbReference type="ChEBI" id="CHEBI:16526"/>
        <dbReference type="ChEBI" id="CHEBI:57792"/>
        <dbReference type="ChEBI" id="CHEBI:59776"/>
        <dbReference type="EC" id="2.2.1.7"/>
    </reaction>
</comment>
<comment type="cofactor">
    <cofactor evidence="1">
        <name>Mg(2+)</name>
        <dbReference type="ChEBI" id="CHEBI:18420"/>
    </cofactor>
    <text evidence="1">Binds 1 Mg(2+) ion per subunit.</text>
</comment>
<comment type="cofactor">
    <cofactor evidence="1">
        <name>thiamine diphosphate</name>
        <dbReference type="ChEBI" id="CHEBI:58937"/>
    </cofactor>
    <text evidence="1">Binds 1 thiamine pyrophosphate per subunit.</text>
</comment>
<comment type="pathway">
    <text evidence="1">Metabolic intermediate biosynthesis; 1-deoxy-D-xylulose 5-phosphate biosynthesis; 1-deoxy-D-xylulose 5-phosphate from D-glyceraldehyde 3-phosphate and pyruvate: step 1/1.</text>
</comment>
<comment type="subunit">
    <text evidence="1">Homodimer.</text>
</comment>
<comment type="similarity">
    <text evidence="1">Belongs to the transketolase family. DXPS subfamily.</text>
</comment>
<protein>
    <recommendedName>
        <fullName evidence="1">1-deoxy-D-xylulose-5-phosphate synthase</fullName>
        <ecNumber evidence="1">2.2.1.7</ecNumber>
    </recommendedName>
    <alternativeName>
        <fullName evidence="1">1-deoxyxylulose-5-phosphate synthase</fullName>
        <shortName evidence="1">DXP synthase</shortName>
        <shortName evidence="1">DXPS</shortName>
    </alternativeName>
</protein>
<gene>
    <name evidence="1" type="primary">dxs</name>
    <name type="ordered locus">Mmc1_1048</name>
</gene>
<proteinExistence type="inferred from homology"/>
<feature type="chain" id="PRO_1000119551" description="1-deoxy-D-xylulose-5-phosphate synthase">
    <location>
        <begin position="1"/>
        <end position="622"/>
    </location>
</feature>
<feature type="binding site" evidence="1">
    <location>
        <position position="74"/>
    </location>
    <ligand>
        <name>thiamine diphosphate</name>
        <dbReference type="ChEBI" id="CHEBI:58937"/>
    </ligand>
</feature>
<feature type="binding site" evidence="1">
    <location>
        <begin position="115"/>
        <end position="117"/>
    </location>
    <ligand>
        <name>thiamine diphosphate</name>
        <dbReference type="ChEBI" id="CHEBI:58937"/>
    </ligand>
</feature>
<feature type="binding site" evidence="1">
    <location>
        <position position="146"/>
    </location>
    <ligand>
        <name>Mg(2+)</name>
        <dbReference type="ChEBI" id="CHEBI:18420"/>
    </ligand>
</feature>
<feature type="binding site" evidence="1">
    <location>
        <begin position="147"/>
        <end position="148"/>
    </location>
    <ligand>
        <name>thiamine diphosphate</name>
        <dbReference type="ChEBI" id="CHEBI:58937"/>
    </ligand>
</feature>
<feature type="binding site" evidence="1">
    <location>
        <position position="177"/>
    </location>
    <ligand>
        <name>Mg(2+)</name>
        <dbReference type="ChEBI" id="CHEBI:18420"/>
    </ligand>
</feature>
<feature type="binding site" evidence="1">
    <location>
        <position position="177"/>
    </location>
    <ligand>
        <name>thiamine diphosphate</name>
        <dbReference type="ChEBI" id="CHEBI:58937"/>
    </ligand>
</feature>
<feature type="binding site" evidence="1">
    <location>
        <position position="285"/>
    </location>
    <ligand>
        <name>thiamine diphosphate</name>
        <dbReference type="ChEBI" id="CHEBI:58937"/>
    </ligand>
</feature>
<feature type="binding site" evidence="1">
    <location>
        <position position="366"/>
    </location>
    <ligand>
        <name>thiamine diphosphate</name>
        <dbReference type="ChEBI" id="CHEBI:58937"/>
    </ligand>
</feature>
<accession>A0L6H3</accession>
<keyword id="KW-0414">Isoprene biosynthesis</keyword>
<keyword id="KW-0460">Magnesium</keyword>
<keyword id="KW-0479">Metal-binding</keyword>
<keyword id="KW-1185">Reference proteome</keyword>
<keyword id="KW-0784">Thiamine biosynthesis</keyword>
<keyword id="KW-0786">Thiamine pyrophosphate</keyword>
<keyword id="KW-0808">Transferase</keyword>
<sequence>MTTLLSTIDSPKALRQLNEAKLPQVAQEMRDHIIECVSQSGGHLGASLGVVELTIALHYVFNTPDDRLVWDVGHQSYGHKVLTGRRDQLASIRQRHGLSGFTKRSESPYDPFGTGHSSTSISAAMGMARAAKANGIQRKAVAVIGDGAMGAGMAFEALNHAGHDNHDLDLVVVLNDNEMSISPNVGALSSYLNRMLSGGAYNAFRDGTGKVLKTISRSMWDAAKKAEEHVKGLVMPGTLFEELGFTYFGPINGHDFDALLPTLRNVQKLGGPILLHVITKKGKGFPPAEEHPCTYHGVAPFDKDTGIIQSSSGGTSYTKVFAQELCALAEQNPHIHAITAAMREGTGLNLFEKRFPERFHDVGIAEQHAVTFAAGLATEGILPVVAIYSTFMQRAYDQLIHDVALQDLPVIFALDRAGLVGADGATHAGAYDLSYLRTVPGMTIMAPADENELRHMLHTAVALNKPVALRYPRGTALGLPPEPPHVLEIGRGRTLRKGEHAAILAVGQPVHPALEAAAILEQQGISVSVYDARFVKPLDQRLLQEVAMHGVVLVVEENAVQGGFGSAVLESLSNQGALDRGLKIRCMGIPDRYIPHGTQKELRGEIGLDAVGIATTLKELLG</sequence>
<dbReference type="EC" id="2.2.1.7" evidence="1"/>
<dbReference type="EMBL" id="CP000471">
    <property type="protein sequence ID" value="ABK43566.1"/>
    <property type="molecule type" value="Genomic_DNA"/>
</dbReference>
<dbReference type="RefSeq" id="WP_011712723.1">
    <property type="nucleotide sequence ID" value="NC_008576.1"/>
</dbReference>
<dbReference type="SMR" id="A0L6H3"/>
<dbReference type="STRING" id="156889.Mmc1_1048"/>
<dbReference type="KEGG" id="mgm:Mmc1_1048"/>
<dbReference type="eggNOG" id="COG1154">
    <property type="taxonomic scope" value="Bacteria"/>
</dbReference>
<dbReference type="HOGENOM" id="CLU_009227_1_4_5"/>
<dbReference type="OrthoDB" id="9803371at2"/>
<dbReference type="UniPathway" id="UPA00064">
    <property type="reaction ID" value="UER00091"/>
</dbReference>
<dbReference type="Proteomes" id="UP000002586">
    <property type="component" value="Chromosome"/>
</dbReference>
<dbReference type="GO" id="GO:0005829">
    <property type="term" value="C:cytosol"/>
    <property type="evidence" value="ECO:0007669"/>
    <property type="project" value="TreeGrafter"/>
</dbReference>
<dbReference type="GO" id="GO:0008661">
    <property type="term" value="F:1-deoxy-D-xylulose-5-phosphate synthase activity"/>
    <property type="evidence" value="ECO:0007669"/>
    <property type="project" value="UniProtKB-UniRule"/>
</dbReference>
<dbReference type="GO" id="GO:0000287">
    <property type="term" value="F:magnesium ion binding"/>
    <property type="evidence" value="ECO:0007669"/>
    <property type="project" value="UniProtKB-UniRule"/>
</dbReference>
<dbReference type="GO" id="GO:0030976">
    <property type="term" value="F:thiamine pyrophosphate binding"/>
    <property type="evidence" value="ECO:0007669"/>
    <property type="project" value="UniProtKB-UniRule"/>
</dbReference>
<dbReference type="GO" id="GO:0052865">
    <property type="term" value="P:1-deoxy-D-xylulose 5-phosphate biosynthetic process"/>
    <property type="evidence" value="ECO:0007669"/>
    <property type="project" value="UniProtKB-UniPathway"/>
</dbReference>
<dbReference type="GO" id="GO:0019288">
    <property type="term" value="P:isopentenyl diphosphate biosynthetic process, methylerythritol 4-phosphate pathway"/>
    <property type="evidence" value="ECO:0007669"/>
    <property type="project" value="TreeGrafter"/>
</dbReference>
<dbReference type="GO" id="GO:0016114">
    <property type="term" value="P:terpenoid biosynthetic process"/>
    <property type="evidence" value="ECO:0007669"/>
    <property type="project" value="UniProtKB-UniRule"/>
</dbReference>
<dbReference type="GO" id="GO:0009228">
    <property type="term" value="P:thiamine biosynthetic process"/>
    <property type="evidence" value="ECO:0007669"/>
    <property type="project" value="UniProtKB-UniRule"/>
</dbReference>
<dbReference type="CDD" id="cd02007">
    <property type="entry name" value="TPP_DXS"/>
    <property type="match status" value="1"/>
</dbReference>
<dbReference type="CDD" id="cd07033">
    <property type="entry name" value="TPP_PYR_DXS_TK_like"/>
    <property type="match status" value="1"/>
</dbReference>
<dbReference type="FunFam" id="3.40.50.920:FF:000002">
    <property type="entry name" value="1-deoxy-D-xylulose-5-phosphate synthase"/>
    <property type="match status" value="1"/>
</dbReference>
<dbReference type="FunFam" id="3.40.50.970:FF:000005">
    <property type="entry name" value="1-deoxy-D-xylulose-5-phosphate synthase"/>
    <property type="match status" value="1"/>
</dbReference>
<dbReference type="Gene3D" id="3.40.50.920">
    <property type="match status" value="1"/>
</dbReference>
<dbReference type="Gene3D" id="3.40.50.970">
    <property type="match status" value="2"/>
</dbReference>
<dbReference type="HAMAP" id="MF_00315">
    <property type="entry name" value="DXP_synth"/>
    <property type="match status" value="1"/>
</dbReference>
<dbReference type="InterPro" id="IPR005477">
    <property type="entry name" value="Dxylulose-5-P_synthase"/>
</dbReference>
<dbReference type="InterPro" id="IPR029061">
    <property type="entry name" value="THDP-binding"/>
</dbReference>
<dbReference type="InterPro" id="IPR009014">
    <property type="entry name" value="Transketo_C/PFOR_II"/>
</dbReference>
<dbReference type="InterPro" id="IPR005475">
    <property type="entry name" value="Transketolase-like_Pyr-bd"/>
</dbReference>
<dbReference type="InterPro" id="IPR020826">
    <property type="entry name" value="Transketolase_BS"/>
</dbReference>
<dbReference type="InterPro" id="IPR033248">
    <property type="entry name" value="Transketolase_C"/>
</dbReference>
<dbReference type="InterPro" id="IPR049557">
    <property type="entry name" value="Transketolase_CS"/>
</dbReference>
<dbReference type="NCBIfam" id="TIGR00204">
    <property type="entry name" value="dxs"/>
    <property type="match status" value="1"/>
</dbReference>
<dbReference type="NCBIfam" id="NF003933">
    <property type="entry name" value="PRK05444.2-2"/>
    <property type="match status" value="1"/>
</dbReference>
<dbReference type="PANTHER" id="PTHR43322">
    <property type="entry name" value="1-D-DEOXYXYLULOSE 5-PHOSPHATE SYNTHASE-RELATED"/>
    <property type="match status" value="1"/>
</dbReference>
<dbReference type="PANTHER" id="PTHR43322:SF5">
    <property type="entry name" value="1-DEOXY-D-XYLULOSE-5-PHOSPHATE SYNTHASE, CHLOROPLASTIC"/>
    <property type="match status" value="1"/>
</dbReference>
<dbReference type="Pfam" id="PF13292">
    <property type="entry name" value="DXP_synthase_N"/>
    <property type="match status" value="1"/>
</dbReference>
<dbReference type="Pfam" id="PF02779">
    <property type="entry name" value="Transket_pyr"/>
    <property type="match status" value="1"/>
</dbReference>
<dbReference type="Pfam" id="PF02780">
    <property type="entry name" value="Transketolase_C"/>
    <property type="match status" value="1"/>
</dbReference>
<dbReference type="SMART" id="SM00861">
    <property type="entry name" value="Transket_pyr"/>
    <property type="match status" value="1"/>
</dbReference>
<dbReference type="SUPFAM" id="SSF52518">
    <property type="entry name" value="Thiamin diphosphate-binding fold (THDP-binding)"/>
    <property type="match status" value="2"/>
</dbReference>
<dbReference type="SUPFAM" id="SSF52922">
    <property type="entry name" value="TK C-terminal domain-like"/>
    <property type="match status" value="1"/>
</dbReference>
<dbReference type="PROSITE" id="PS00801">
    <property type="entry name" value="TRANSKETOLASE_1"/>
    <property type="match status" value="1"/>
</dbReference>
<dbReference type="PROSITE" id="PS00802">
    <property type="entry name" value="TRANSKETOLASE_2"/>
    <property type="match status" value="1"/>
</dbReference>
<reference key="1">
    <citation type="journal article" date="2009" name="Appl. Environ. Microbiol.">
        <title>Complete genome sequence of the chemolithoautotrophic marine magnetotactic coccus strain MC-1.</title>
        <authorList>
            <person name="Schubbe S."/>
            <person name="Williams T.J."/>
            <person name="Xie G."/>
            <person name="Kiss H.E."/>
            <person name="Brettin T.S."/>
            <person name="Martinez D."/>
            <person name="Ross C.A."/>
            <person name="Schuler D."/>
            <person name="Cox B.L."/>
            <person name="Nealson K.H."/>
            <person name="Bazylinski D.A."/>
        </authorList>
    </citation>
    <scope>NUCLEOTIDE SEQUENCE [LARGE SCALE GENOMIC DNA]</scope>
    <source>
        <strain>ATCC BAA-1437 / JCM 17883 / MC-1</strain>
    </source>
</reference>
<organism>
    <name type="scientific">Magnetococcus marinus (strain ATCC BAA-1437 / JCM 17883 / MC-1)</name>
    <dbReference type="NCBI Taxonomy" id="156889"/>
    <lineage>
        <taxon>Bacteria</taxon>
        <taxon>Pseudomonadati</taxon>
        <taxon>Pseudomonadota</taxon>
        <taxon>Alphaproteobacteria</taxon>
        <taxon>Magnetococcales</taxon>
        <taxon>Magnetococcaceae</taxon>
        <taxon>Magnetococcus</taxon>
    </lineage>
</organism>
<evidence type="ECO:0000255" key="1">
    <source>
        <dbReference type="HAMAP-Rule" id="MF_00315"/>
    </source>
</evidence>
<name>DXS_MAGMM</name>